<comment type="function">
    <text evidence="1">Binds to the 23S rRNA.</text>
</comment>
<comment type="similarity">
    <text evidence="1">Belongs to the bacterial ribosomal protein bL9 family.</text>
</comment>
<gene>
    <name evidence="1" type="primary">rplI</name>
    <name type="ordered locus">Deide_00100</name>
</gene>
<sequence>MQVILLEPGKLGKTGDVVNVKDGYARNWLIPQGIASPATNSNMKSLEARVRSRQKIQAQEKAAAEDLASRLNGVAVELSVRAGEGKIYGAVTHQDVANSLDKLGFDVDKRRIEMPKTVKEIGEYDISYRAHPEVTIPMKLVVHAQK</sequence>
<feature type="chain" id="PRO_1000206541" description="Large ribosomal subunit protein bL9">
    <location>
        <begin position="1"/>
        <end position="146"/>
    </location>
</feature>
<protein>
    <recommendedName>
        <fullName evidence="1">Large ribosomal subunit protein bL9</fullName>
    </recommendedName>
    <alternativeName>
        <fullName evidence="2">50S ribosomal protein L9</fullName>
    </alternativeName>
</protein>
<evidence type="ECO:0000255" key="1">
    <source>
        <dbReference type="HAMAP-Rule" id="MF_00503"/>
    </source>
</evidence>
<evidence type="ECO:0000305" key="2"/>
<proteinExistence type="inferred from homology"/>
<reference key="1">
    <citation type="journal article" date="2009" name="PLoS Genet.">
        <title>Alliance of proteomics and genomics to unravel the specificities of Sahara bacterium Deinococcus deserti.</title>
        <authorList>
            <person name="de Groot A."/>
            <person name="Dulermo R."/>
            <person name="Ortet P."/>
            <person name="Blanchard L."/>
            <person name="Guerin P."/>
            <person name="Fernandez B."/>
            <person name="Vacherie B."/>
            <person name="Dossat C."/>
            <person name="Jolivet E."/>
            <person name="Siguier P."/>
            <person name="Chandler M."/>
            <person name="Barakat M."/>
            <person name="Dedieu A."/>
            <person name="Barbe V."/>
            <person name="Heulin T."/>
            <person name="Sommer S."/>
            <person name="Achouak W."/>
            <person name="Armengaud J."/>
        </authorList>
    </citation>
    <scope>NUCLEOTIDE SEQUENCE [LARGE SCALE GENOMIC DNA]</scope>
    <source>
        <strain>DSM 17065 / CIP 109153 / LMG 22923 / VCD115</strain>
    </source>
</reference>
<organism>
    <name type="scientific">Deinococcus deserti (strain DSM 17065 / CIP 109153 / LMG 22923 / VCD115)</name>
    <dbReference type="NCBI Taxonomy" id="546414"/>
    <lineage>
        <taxon>Bacteria</taxon>
        <taxon>Thermotogati</taxon>
        <taxon>Deinococcota</taxon>
        <taxon>Deinococci</taxon>
        <taxon>Deinococcales</taxon>
        <taxon>Deinococcaceae</taxon>
        <taxon>Deinococcus</taxon>
    </lineage>
</organism>
<dbReference type="EMBL" id="CP001114">
    <property type="protein sequence ID" value="ACO44805.1"/>
    <property type="molecule type" value="Genomic_DNA"/>
</dbReference>
<dbReference type="RefSeq" id="WP_012691928.1">
    <property type="nucleotide sequence ID" value="NC_012526.1"/>
</dbReference>
<dbReference type="SMR" id="C1CXJ9"/>
<dbReference type="STRING" id="546414.Deide_00100"/>
<dbReference type="PaxDb" id="546414-Deide_00100"/>
<dbReference type="KEGG" id="ddr:Deide_00100"/>
<dbReference type="eggNOG" id="COG0359">
    <property type="taxonomic scope" value="Bacteria"/>
</dbReference>
<dbReference type="HOGENOM" id="CLU_078938_4_1_0"/>
<dbReference type="OrthoDB" id="9788336at2"/>
<dbReference type="Proteomes" id="UP000002208">
    <property type="component" value="Chromosome"/>
</dbReference>
<dbReference type="GO" id="GO:1990904">
    <property type="term" value="C:ribonucleoprotein complex"/>
    <property type="evidence" value="ECO:0007669"/>
    <property type="project" value="UniProtKB-KW"/>
</dbReference>
<dbReference type="GO" id="GO:0005840">
    <property type="term" value="C:ribosome"/>
    <property type="evidence" value="ECO:0007669"/>
    <property type="project" value="UniProtKB-KW"/>
</dbReference>
<dbReference type="GO" id="GO:0019843">
    <property type="term" value="F:rRNA binding"/>
    <property type="evidence" value="ECO:0007669"/>
    <property type="project" value="UniProtKB-UniRule"/>
</dbReference>
<dbReference type="GO" id="GO:0003735">
    <property type="term" value="F:structural constituent of ribosome"/>
    <property type="evidence" value="ECO:0007669"/>
    <property type="project" value="InterPro"/>
</dbReference>
<dbReference type="GO" id="GO:0006412">
    <property type="term" value="P:translation"/>
    <property type="evidence" value="ECO:0007669"/>
    <property type="project" value="UniProtKB-UniRule"/>
</dbReference>
<dbReference type="FunFam" id="3.10.430.100:FF:000006">
    <property type="entry name" value="50S ribosomal protein L9"/>
    <property type="match status" value="1"/>
</dbReference>
<dbReference type="Gene3D" id="3.10.430.100">
    <property type="entry name" value="Ribosomal protein L9, C-terminal domain"/>
    <property type="match status" value="1"/>
</dbReference>
<dbReference type="Gene3D" id="3.40.5.10">
    <property type="entry name" value="Ribosomal protein L9, N-terminal domain"/>
    <property type="match status" value="1"/>
</dbReference>
<dbReference type="HAMAP" id="MF_00503">
    <property type="entry name" value="Ribosomal_bL9"/>
    <property type="match status" value="1"/>
</dbReference>
<dbReference type="InterPro" id="IPR000244">
    <property type="entry name" value="Ribosomal_bL9"/>
</dbReference>
<dbReference type="InterPro" id="IPR009027">
    <property type="entry name" value="Ribosomal_bL9/RNase_H1_N"/>
</dbReference>
<dbReference type="InterPro" id="IPR020594">
    <property type="entry name" value="Ribosomal_bL9_bac/chp"/>
</dbReference>
<dbReference type="InterPro" id="IPR020069">
    <property type="entry name" value="Ribosomal_bL9_C"/>
</dbReference>
<dbReference type="InterPro" id="IPR036791">
    <property type="entry name" value="Ribosomal_bL9_C_sf"/>
</dbReference>
<dbReference type="InterPro" id="IPR020070">
    <property type="entry name" value="Ribosomal_bL9_N"/>
</dbReference>
<dbReference type="InterPro" id="IPR036935">
    <property type="entry name" value="Ribosomal_bL9_N_sf"/>
</dbReference>
<dbReference type="NCBIfam" id="TIGR00158">
    <property type="entry name" value="L9"/>
    <property type="match status" value="1"/>
</dbReference>
<dbReference type="PANTHER" id="PTHR21368">
    <property type="entry name" value="50S RIBOSOMAL PROTEIN L9"/>
    <property type="match status" value="1"/>
</dbReference>
<dbReference type="Pfam" id="PF03948">
    <property type="entry name" value="Ribosomal_L9_C"/>
    <property type="match status" value="1"/>
</dbReference>
<dbReference type="Pfam" id="PF01281">
    <property type="entry name" value="Ribosomal_L9_N"/>
    <property type="match status" value="1"/>
</dbReference>
<dbReference type="SUPFAM" id="SSF55658">
    <property type="entry name" value="L9 N-domain-like"/>
    <property type="match status" value="1"/>
</dbReference>
<dbReference type="SUPFAM" id="SSF55653">
    <property type="entry name" value="Ribosomal protein L9 C-domain"/>
    <property type="match status" value="1"/>
</dbReference>
<dbReference type="PROSITE" id="PS00651">
    <property type="entry name" value="RIBOSOMAL_L9"/>
    <property type="match status" value="1"/>
</dbReference>
<name>RL9_DEIDV</name>
<keyword id="KW-1185">Reference proteome</keyword>
<keyword id="KW-0687">Ribonucleoprotein</keyword>
<keyword id="KW-0689">Ribosomal protein</keyword>
<keyword id="KW-0694">RNA-binding</keyword>
<keyword id="KW-0699">rRNA-binding</keyword>
<accession>C1CXJ9</accession>